<name>SYT_METCA</name>
<proteinExistence type="inferred from homology"/>
<comment type="function">
    <text evidence="1">Catalyzes the attachment of threonine to tRNA(Thr) in a two-step reaction: L-threonine is first activated by ATP to form Thr-AMP and then transferred to the acceptor end of tRNA(Thr). Also edits incorrectly charged L-seryl-tRNA(Thr).</text>
</comment>
<comment type="catalytic activity">
    <reaction evidence="1">
        <text>tRNA(Thr) + L-threonine + ATP = L-threonyl-tRNA(Thr) + AMP + diphosphate + H(+)</text>
        <dbReference type="Rhea" id="RHEA:24624"/>
        <dbReference type="Rhea" id="RHEA-COMP:9670"/>
        <dbReference type="Rhea" id="RHEA-COMP:9704"/>
        <dbReference type="ChEBI" id="CHEBI:15378"/>
        <dbReference type="ChEBI" id="CHEBI:30616"/>
        <dbReference type="ChEBI" id="CHEBI:33019"/>
        <dbReference type="ChEBI" id="CHEBI:57926"/>
        <dbReference type="ChEBI" id="CHEBI:78442"/>
        <dbReference type="ChEBI" id="CHEBI:78534"/>
        <dbReference type="ChEBI" id="CHEBI:456215"/>
        <dbReference type="EC" id="6.1.1.3"/>
    </reaction>
</comment>
<comment type="cofactor">
    <cofactor evidence="1">
        <name>Zn(2+)</name>
        <dbReference type="ChEBI" id="CHEBI:29105"/>
    </cofactor>
    <text evidence="1">Binds 1 zinc ion per subunit.</text>
</comment>
<comment type="subunit">
    <text evidence="1">Homodimer.</text>
</comment>
<comment type="subcellular location">
    <subcellularLocation>
        <location evidence="1">Cytoplasm</location>
    </subcellularLocation>
</comment>
<comment type="similarity">
    <text evidence="1">Belongs to the class-II aminoacyl-tRNA synthetase family.</text>
</comment>
<organism>
    <name type="scientific">Methylococcus capsulatus (strain ATCC 33009 / NCIMB 11132 / Bath)</name>
    <dbReference type="NCBI Taxonomy" id="243233"/>
    <lineage>
        <taxon>Bacteria</taxon>
        <taxon>Pseudomonadati</taxon>
        <taxon>Pseudomonadota</taxon>
        <taxon>Gammaproteobacteria</taxon>
        <taxon>Methylococcales</taxon>
        <taxon>Methylococcaceae</taxon>
        <taxon>Methylococcus</taxon>
    </lineage>
</organism>
<feature type="chain" id="PRO_0000101006" description="Threonine--tRNA ligase">
    <location>
        <begin position="1"/>
        <end position="638"/>
    </location>
</feature>
<feature type="domain" description="TGS" evidence="2">
    <location>
        <begin position="1"/>
        <end position="61"/>
    </location>
</feature>
<feature type="region of interest" description="Catalytic" evidence="1">
    <location>
        <begin position="242"/>
        <end position="533"/>
    </location>
</feature>
<feature type="binding site" evidence="1">
    <location>
        <position position="333"/>
    </location>
    <ligand>
        <name>Zn(2+)</name>
        <dbReference type="ChEBI" id="CHEBI:29105"/>
    </ligand>
</feature>
<feature type="binding site" evidence="1">
    <location>
        <position position="384"/>
    </location>
    <ligand>
        <name>Zn(2+)</name>
        <dbReference type="ChEBI" id="CHEBI:29105"/>
    </ligand>
</feature>
<feature type="binding site" evidence="1">
    <location>
        <position position="510"/>
    </location>
    <ligand>
        <name>Zn(2+)</name>
        <dbReference type="ChEBI" id="CHEBI:29105"/>
    </ligand>
</feature>
<dbReference type="EC" id="6.1.1.3" evidence="1"/>
<dbReference type="EMBL" id="AE017282">
    <property type="protein sequence ID" value="AAU93168.1"/>
    <property type="molecule type" value="Genomic_DNA"/>
</dbReference>
<dbReference type="RefSeq" id="WP_010960032.1">
    <property type="nucleotide sequence ID" value="NC_002977.6"/>
</dbReference>
<dbReference type="SMR" id="Q60AZ3"/>
<dbReference type="STRING" id="243233.MCA0693"/>
<dbReference type="GeneID" id="88223013"/>
<dbReference type="KEGG" id="mca:MCA0693"/>
<dbReference type="eggNOG" id="COG0441">
    <property type="taxonomic scope" value="Bacteria"/>
</dbReference>
<dbReference type="HOGENOM" id="CLU_008554_0_1_6"/>
<dbReference type="Proteomes" id="UP000006821">
    <property type="component" value="Chromosome"/>
</dbReference>
<dbReference type="GO" id="GO:0005829">
    <property type="term" value="C:cytosol"/>
    <property type="evidence" value="ECO:0007669"/>
    <property type="project" value="TreeGrafter"/>
</dbReference>
<dbReference type="GO" id="GO:0005524">
    <property type="term" value="F:ATP binding"/>
    <property type="evidence" value="ECO:0007669"/>
    <property type="project" value="UniProtKB-UniRule"/>
</dbReference>
<dbReference type="GO" id="GO:0046872">
    <property type="term" value="F:metal ion binding"/>
    <property type="evidence" value="ECO:0007669"/>
    <property type="project" value="UniProtKB-KW"/>
</dbReference>
<dbReference type="GO" id="GO:0004829">
    <property type="term" value="F:threonine-tRNA ligase activity"/>
    <property type="evidence" value="ECO:0007669"/>
    <property type="project" value="UniProtKB-UniRule"/>
</dbReference>
<dbReference type="GO" id="GO:0000049">
    <property type="term" value="F:tRNA binding"/>
    <property type="evidence" value="ECO:0007669"/>
    <property type="project" value="UniProtKB-KW"/>
</dbReference>
<dbReference type="GO" id="GO:0006435">
    <property type="term" value="P:threonyl-tRNA aminoacylation"/>
    <property type="evidence" value="ECO:0007669"/>
    <property type="project" value="UniProtKB-UniRule"/>
</dbReference>
<dbReference type="CDD" id="cd01667">
    <property type="entry name" value="TGS_ThrRS"/>
    <property type="match status" value="1"/>
</dbReference>
<dbReference type="CDD" id="cd00860">
    <property type="entry name" value="ThrRS_anticodon"/>
    <property type="match status" value="1"/>
</dbReference>
<dbReference type="CDD" id="cd00771">
    <property type="entry name" value="ThrRS_core"/>
    <property type="match status" value="1"/>
</dbReference>
<dbReference type="FunFam" id="3.10.20.30:FF:000005">
    <property type="entry name" value="Threonine--tRNA ligase"/>
    <property type="match status" value="1"/>
</dbReference>
<dbReference type="FunFam" id="3.30.54.20:FF:000002">
    <property type="entry name" value="Threonine--tRNA ligase"/>
    <property type="match status" value="1"/>
</dbReference>
<dbReference type="FunFam" id="3.30.930.10:FF:000002">
    <property type="entry name" value="Threonine--tRNA ligase"/>
    <property type="match status" value="1"/>
</dbReference>
<dbReference type="FunFam" id="3.40.50.800:FF:000001">
    <property type="entry name" value="Threonine--tRNA ligase"/>
    <property type="match status" value="1"/>
</dbReference>
<dbReference type="FunFam" id="3.30.980.10:FF:000005">
    <property type="entry name" value="Threonyl-tRNA synthetase, mitochondrial"/>
    <property type="match status" value="1"/>
</dbReference>
<dbReference type="Gene3D" id="3.10.20.30">
    <property type="match status" value="1"/>
</dbReference>
<dbReference type="Gene3D" id="3.30.54.20">
    <property type="match status" value="1"/>
</dbReference>
<dbReference type="Gene3D" id="3.40.50.800">
    <property type="entry name" value="Anticodon-binding domain"/>
    <property type="match status" value="1"/>
</dbReference>
<dbReference type="Gene3D" id="3.30.930.10">
    <property type="entry name" value="Bira Bifunctional Protein, Domain 2"/>
    <property type="match status" value="1"/>
</dbReference>
<dbReference type="Gene3D" id="3.30.980.10">
    <property type="entry name" value="Threonyl-trna Synthetase, Chain A, domain 2"/>
    <property type="match status" value="1"/>
</dbReference>
<dbReference type="HAMAP" id="MF_00184">
    <property type="entry name" value="Thr_tRNA_synth"/>
    <property type="match status" value="1"/>
</dbReference>
<dbReference type="InterPro" id="IPR002314">
    <property type="entry name" value="aa-tRNA-synt_IIb"/>
</dbReference>
<dbReference type="InterPro" id="IPR006195">
    <property type="entry name" value="aa-tRNA-synth_II"/>
</dbReference>
<dbReference type="InterPro" id="IPR045864">
    <property type="entry name" value="aa-tRNA-synth_II/BPL/LPL"/>
</dbReference>
<dbReference type="InterPro" id="IPR004154">
    <property type="entry name" value="Anticodon-bd"/>
</dbReference>
<dbReference type="InterPro" id="IPR036621">
    <property type="entry name" value="Anticodon-bd_dom_sf"/>
</dbReference>
<dbReference type="InterPro" id="IPR012675">
    <property type="entry name" value="Beta-grasp_dom_sf"/>
</dbReference>
<dbReference type="InterPro" id="IPR004095">
    <property type="entry name" value="TGS"/>
</dbReference>
<dbReference type="InterPro" id="IPR012676">
    <property type="entry name" value="TGS-like"/>
</dbReference>
<dbReference type="InterPro" id="IPR002320">
    <property type="entry name" value="Thr-tRNA-ligase_IIa"/>
</dbReference>
<dbReference type="InterPro" id="IPR018163">
    <property type="entry name" value="Thr/Ala-tRNA-synth_IIc_edit"/>
</dbReference>
<dbReference type="InterPro" id="IPR047246">
    <property type="entry name" value="ThrRS_anticodon"/>
</dbReference>
<dbReference type="InterPro" id="IPR033728">
    <property type="entry name" value="ThrRS_core"/>
</dbReference>
<dbReference type="InterPro" id="IPR012947">
    <property type="entry name" value="tRNA_SAD"/>
</dbReference>
<dbReference type="NCBIfam" id="TIGR00418">
    <property type="entry name" value="thrS"/>
    <property type="match status" value="1"/>
</dbReference>
<dbReference type="PANTHER" id="PTHR11451:SF44">
    <property type="entry name" value="THREONINE--TRNA LIGASE, CHLOROPLASTIC_MITOCHONDRIAL 2"/>
    <property type="match status" value="1"/>
</dbReference>
<dbReference type="PANTHER" id="PTHR11451">
    <property type="entry name" value="THREONINE-TRNA LIGASE"/>
    <property type="match status" value="1"/>
</dbReference>
<dbReference type="Pfam" id="PF03129">
    <property type="entry name" value="HGTP_anticodon"/>
    <property type="match status" value="1"/>
</dbReference>
<dbReference type="Pfam" id="PF02824">
    <property type="entry name" value="TGS"/>
    <property type="match status" value="1"/>
</dbReference>
<dbReference type="Pfam" id="PF00587">
    <property type="entry name" value="tRNA-synt_2b"/>
    <property type="match status" value="1"/>
</dbReference>
<dbReference type="Pfam" id="PF07973">
    <property type="entry name" value="tRNA_SAD"/>
    <property type="match status" value="1"/>
</dbReference>
<dbReference type="PRINTS" id="PR01047">
    <property type="entry name" value="TRNASYNTHTHR"/>
</dbReference>
<dbReference type="SMART" id="SM00863">
    <property type="entry name" value="tRNA_SAD"/>
    <property type="match status" value="1"/>
</dbReference>
<dbReference type="SUPFAM" id="SSF52954">
    <property type="entry name" value="Class II aaRS ABD-related"/>
    <property type="match status" value="1"/>
</dbReference>
<dbReference type="SUPFAM" id="SSF55681">
    <property type="entry name" value="Class II aaRS and biotin synthetases"/>
    <property type="match status" value="1"/>
</dbReference>
<dbReference type="SUPFAM" id="SSF81271">
    <property type="entry name" value="TGS-like"/>
    <property type="match status" value="1"/>
</dbReference>
<dbReference type="SUPFAM" id="SSF55186">
    <property type="entry name" value="ThrRS/AlaRS common domain"/>
    <property type="match status" value="1"/>
</dbReference>
<dbReference type="PROSITE" id="PS50862">
    <property type="entry name" value="AA_TRNA_LIGASE_II"/>
    <property type="match status" value="1"/>
</dbReference>
<dbReference type="PROSITE" id="PS51880">
    <property type="entry name" value="TGS"/>
    <property type="match status" value="1"/>
</dbReference>
<evidence type="ECO:0000255" key="1">
    <source>
        <dbReference type="HAMAP-Rule" id="MF_00184"/>
    </source>
</evidence>
<evidence type="ECO:0000255" key="2">
    <source>
        <dbReference type="PROSITE-ProRule" id="PRU01228"/>
    </source>
</evidence>
<accession>Q60AZ3</accession>
<reference key="1">
    <citation type="journal article" date="2004" name="PLoS Biol.">
        <title>Genomic insights into methanotrophy: the complete genome sequence of Methylococcus capsulatus (Bath).</title>
        <authorList>
            <person name="Ward N.L."/>
            <person name="Larsen O."/>
            <person name="Sakwa J."/>
            <person name="Bruseth L."/>
            <person name="Khouri H.M."/>
            <person name="Durkin A.S."/>
            <person name="Dimitrov G."/>
            <person name="Jiang L."/>
            <person name="Scanlan D."/>
            <person name="Kang K.H."/>
            <person name="Lewis M.R."/>
            <person name="Nelson K.E."/>
            <person name="Methe B.A."/>
            <person name="Wu M."/>
            <person name="Heidelberg J.F."/>
            <person name="Paulsen I.T."/>
            <person name="Fouts D.E."/>
            <person name="Ravel J."/>
            <person name="Tettelin H."/>
            <person name="Ren Q."/>
            <person name="Read T.D."/>
            <person name="DeBoy R.T."/>
            <person name="Seshadri R."/>
            <person name="Salzberg S.L."/>
            <person name="Jensen H.B."/>
            <person name="Birkeland N.K."/>
            <person name="Nelson W.C."/>
            <person name="Dodson R.J."/>
            <person name="Grindhaug S.H."/>
            <person name="Holt I.E."/>
            <person name="Eidhammer I."/>
            <person name="Jonasen I."/>
            <person name="Vanaken S."/>
            <person name="Utterback T.R."/>
            <person name="Feldblyum T.V."/>
            <person name="Fraser C.M."/>
            <person name="Lillehaug J.R."/>
            <person name="Eisen J.A."/>
        </authorList>
    </citation>
    <scope>NUCLEOTIDE SEQUENCE [LARGE SCALE GENOMIC DNA]</scope>
    <source>
        <strain>ATCC 33009 / NCIMB 11132 / Bath</strain>
    </source>
</reference>
<gene>
    <name evidence="1" type="primary">thrS</name>
    <name type="ordered locus">MCA0693</name>
</gene>
<keyword id="KW-0030">Aminoacyl-tRNA synthetase</keyword>
<keyword id="KW-0067">ATP-binding</keyword>
<keyword id="KW-0963">Cytoplasm</keyword>
<keyword id="KW-0436">Ligase</keyword>
<keyword id="KW-0479">Metal-binding</keyword>
<keyword id="KW-0547">Nucleotide-binding</keyword>
<keyword id="KW-0648">Protein biosynthesis</keyword>
<keyword id="KW-1185">Reference proteome</keyword>
<keyword id="KW-0694">RNA-binding</keyword>
<keyword id="KW-0820">tRNA-binding</keyword>
<keyword id="KW-0862">Zinc</keyword>
<sequence length="638" mass="72428">MPVVTLPDGSRREFDHPVTLLQVAEAIGPGLAKAALAGRVDGRLVDLSHRIEADAEVALVTARDADGVEVIRHSTAHLLAQAVKALYPKAQVTIGPVIQDGFYYDFSYERPFTPEDLEAIEAKMHELAAQALPVERRTMPREEAIAYFRSLGEAYKAEIIEAIPRGEVISLYSQGDFTDLCRGPHVPDTGRLNAFKLMKIAGAYWRGDSRNEMLQRIYGTAWGDRKDLAAYLQRLEEAERRDHRKLGKALDLFHMQEEAPGMVFWHPKGWILWQEIEQYMRRVFRDNGYQEIRTPLVVARTLWERSGHWEKFSDEMFTTASEERDYAIKPMNCPCHVQVYNQGLKSYRDLPLRLAEFGSCHRNELSGALHGLMRVRGFTQDDAHIFCTEEQIQDEVSRFIDLLFKVYADFGFSEVQIKLSTRPEKRVGSDEVWDKAEHALETALNAKGLAWDLQPGEGAFYGPKIEFSLKDCLDRVWQCGTIQVDFSMPDRLGATYVAEDGARHVPVMLHRAILGSLERFVGILTEHYAGQYPLWLAPVQAVVLNITDRQADYAREVAQEFVSKGFRVIADLRNEKVGFKIREHSMQRVPYLLIVGDKEVEAGSVSLRTRDGKDHGSFGIGDLVAKFTEETMKRAVSH</sequence>
<protein>
    <recommendedName>
        <fullName evidence="1">Threonine--tRNA ligase</fullName>
        <ecNumber evidence="1">6.1.1.3</ecNumber>
    </recommendedName>
    <alternativeName>
        <fullName evidence="1">Threonyl-tRNA synthetase</fullName>
        <shortName evidence="1">ThrRS</shortName>
    </alternativeName>
</protein>